<keyword id="KW-0131">Cell cycle</keyword>
<keyword id="KW-0132">Cell division</keyword>
<keyword id="KW-0137">Centromere</keyword>
<keyword id="KW-0158">Chromosome</keyword>
<keyword id="KW-0159">Chromosome partition</keyword>
<keyword id="KW-0963">Cytoplasm</keyword>
<keyword id="KW-0206">Cytoskeleton</keyword>
<keyword id="KW-0995">Kinetochore</keyword>
<keyword id="KW-0493">Microtubule</keyword>
<keyword id="KW-0498">Mitosis</keyword>
<keyword id="KW-0539">Nucleus</keyword>
<keyword id="KW-1185">Reference proteome</keyword>
<name>DAD3_DEBHA</name>
<evidence type="ECO:0000250" key="1">
    <source>
        <dbReference type="UniProtKB" id="P62505"/>
    </source>
</evidence>
<evidence type="ECO:0000250" key="2">
    <source>
        <dbReference type="UniProtKB" id="P69850"/>
    </source>
</evidence>
<evidence type="ECO:0000256" key="3">
    <source>
        <dbReference type="SAM" id="MobiDB-lite"/>
    </source>
</evidence>
<evidence type="ECO:0000305" key="4"/>
<gene>
    <name type="primary">DAD3</name>
    <name type="ordered locus">DEHA2F13310g</name>
</gene>
<sequence length="143" mass="16100">MLLSPIEAQILSQYQLLAVQLNTLSSEVKQLNSTTNQNSRPSGKSSSSEDGVEATNSGSADKLLDNLRNLEMKIGLVYTLFKGAVYSLFLQYEEDQNLKNDEEQRRNDDSDEEPQNHHEIDAIEGENNDDMGDRMESQENHGH</sequence>
<comment type="function">
    <text evidence="2">Component of the DASH complex that connects microtubules with kinetochores and couples microtubule depolymerisation to chromosome movement; it is involved in retrieving kinetochores to the spindle poles before their re-orientation on the spindle in early mitosis and allows microtubule depolymerization to pull chromosomes apart and resist detachment during anaphase. Kinetochores, consisting of a centromere-associated inner segment and a microtubule-contacting outer segment, play a crucial role in chromosome segregation by mediating the physical connection between centromeric DNA and microtubules. Kinetochores also serve as an input point for the spindle assembly checkpoint, which delays anaphase until all chromosomes have bioriented on the mitotic spindle.</text>
</comment>
<comment type="subunit">
    <text evidence="1 2">Component of the DASH complex consisting of ASK1, DAD1, DAD2, DAD3, DAD4, DAM1, DUO1, HSK3, SPC19 and SPC34, with a stoichiometry of one copy of each subunit per complex. Multiple DASH complexes oligomerize to form a ring that encircles spindle microtubules and organizes the rod-like NDC80 complexes of the outer kinetochore. DASH complex oligomerization strengthens microtubule attachments (By similarity). On cytoplasmic microtubules, DASH complexes appear to form patches instead of rings (By similarity).</text>
</comment>
<comment type="subcellular location">
    <subcellularLocation>
        <location evidence="2">Nucleus</location>
    </subcellularLocation>
    <subcellularLocation>
        <location evidence="2">Cytoplasm</location>
        <location evidence="2">Cytoskeleton</location>
        <location evidence="2">Spindle</location>
    </subcellularLocation>
    <subcellularLocation>
        <location evidence="2">Chromosome</location>
        <location evidence="2">Centromere</location>
        <location evidence="2">Kinetochore</location>
    </subcellularLocation>
</comment>
<comment type="similarity">
    <text evidence="4">Belongs to the DASH complex DAD3 family.</text>
</comment>
<comment type="sequence caution" evidence="4">
    <conflict type="erroneous initiation">
        <sequence resource="EMBL-CDS" id="CAG89300"/>
    </conflict>
</comment>
<protein>
    <recommendedName>
        <fullName>DASH complex subunit DAD3</fullName>
    </recommendedName>
    <alternativeName>
        <fullName>Outer kinetochore protein DAD3</fullName>
    </alternativeName>
</protein>
<accession>Q6BLH9</accession>
<organism>
    <name type="scientific">Debaryomyces hansenii (strain ATCC 36239 / CBS 767 / BCRC 21394 / JCM 1990 / NBRC 0083 / IGC 2968)</name>
    <name type="common">Yeast</name>
    <name type="synonym">Torulaspora hansenii</name>
    <dbReference type="NCBI Taxonomy" id="284592"/>
    <lineage>
        <taxon>Eukaryota</taxon>
        <taxon>Fungi</taxon>
        <taxon>Dikarya</taxon>
        <taxon>Ascomycota</taxon>
        <taxon>Saccharomycotina</taxon>
        <taxon>Pichiomycetes</taxon>
        <taxon>Debaryomycetaceae</taxon>
        <taxon>Debaryomyces</taxon>
    </lineage>
</organism>
<proteinExistence type="inferred from homology"/>
<dbReference type="EMBL" id="CR382138">
    <property type="protein sequence ID" value="CAG89300.2"/>
    <property type="status" value="ALT_INIT"/>
    <property type="molecule type" value="Genomic_DNA"/>
</dbReference>
<dbReference type="RefSeq" id="XP_460942.2">
    <property type="nucleotide sequence ID" value="XM_460942.2"/>
</dbReference>
<dbReference type="SMR" id="Q6BLH9"/>
<dbReference type="FunCoup" id="Q6BLH9">
    <property type="interactions" value="10"/>
</dbReference>
<dbReference type="STRING" id="284592.Q6BLH9"/>
<dbReference type="GeneID" id="2903561"/>
<dbReference type="KEGG" id="dha:DEHA2F13310g"/>
<dbReference type="eggNOG" id="ENOG502S7SV">
    <property type="taxonomic scope" value="Eukaryota"/>
</dbReference>
<dbReference type="HOGENOM" id="CLU_149455_0_0_1"/>
<dbReference type="InParanoid" id="Q6BLH9"/>
<dbReference type="OrthoDB" id="2443965at2759"/>
<dbReference type="Proteomes" id="UP000000599">
    <property type="component" value="Chromosome F"/>
</dbReference>
<dbReference type="GO" id="GO:0005737">
    <property type="term" value="C:cytoplasm"/>
    <property type="evidence" value="ECO:0007669"/>
    <property type="project" value="UniProtKB-KW"/>
</dbReference>
<dbReference type="GO" id="GO:0042729">
    <property type="term" value="C:DASH complex"/>
    <property type="evidence" value="ECO:0000250"/>
    <property type="project" value="UniProtKB"/>
</dbReference>
<dbReference type="GO" id="GO:0005874">
    <property type="term" value="C:microtubule"/>
    <property type="evidence" value="ECO:0007669"/>
    <property type="project" value="UniProtKB-KW"/>
</dbReference>
<dbReference type="GO" id="GO:0072686">
    <property type="term" value="C:mitotic spindle"/>
    <property type="evidence" value="ECO:0007669"/>
    <property type="project" value="InterPro"/>
</dbReference>
<dbReference type="GO" id="GO:0051010">
    <property type="term" value="F:microtubule plus-end binding"/>
    <property type="evidence" value="ECO:0007669"/>
    <property type="project" value="TreeGrafter"/>
</dbReference>
<dbReference type="GO" id="GO:0008608">
    <property type="term" value="P:attachment of spindle microtubules to kinetochore"/>
    <property type="evidence" value="ECO:0000250"/>
    <property type="project" value="UniProtKB"/>
</dbReference>
<dbReference type="GO" id="GO:0051301">
    <property type="term" value="P:cell division"/>
    <property type="evidence" value="ECO:0007669"/>
    <property type="project" value="UniProtKB-KW"/>
</dbReference>
<dbReference type="GO" id="GO:1990758">
    <property type="term" value="P:mitotic sister chromatid biorientation"/>
    <property type="evidence" value="ECO:0000250"/>
    <property type="project" value="UniProtKB"/>
</dbReference>
<dbReference type="GO" id="GO:1990976">
    <property type="term" value="P:protein transport along microtubule to mitotic spindle pole body"/>
    <property type="evidence" value="ECO:0000250"/>
    <property type="project" value="UniProtKB"/>
</dbReference>
<dbReference type="InterPro" id="IPR013965">
    <property type="entry name" value="DASH_Dad3"/>
</dbReference>
<dbReference type="PANTHER" id="PTHR28017">
    <property type="entry name" value="DASH COMPLEX SUBUNIT DAD3"/>
    <property type="match status" value="1"/>
</dbReference>
<dbReference type="PANTHER" id="PTHR28017:SF1">
    <property type="entry name" value="DASH COMPLEX SUBUNIT DAD3"/>
    <property type="match status" value="1"/>
</dbReference>
<dbReference type="Pfam" id="PF08656">
    <property type="entry name" value="DASH_Dad3"/>
    <property type="match status" value="1"/>
</dbReference>
<reference key="1">
    <citation type="journal article" date="2004" name="Nature">
        <title>Genome evolution in yeasts.</title>
        <authorList>
            <person name="Dujon B."/>
            <person name="Sherman D."/>
            <person name="Fischer G."/>
            <person name="Durrens P."/>
            <person name="Casaregola S."/>
            <person name="Lafontaine I."/>
            <person name="de Montigny J."/>
            <person name="Marck C."/>
            <person name="Neuveglise C."/>
            <person name="Talla E."/>
            <person name="Goffard N."/>
            <person name="Frangeul L."/>
            <person name="Aigle M."/>
            <person name="Anthouard V."/>
            <person name="Babour A."/>
            <person name="Barbe V."/>
            <person name="Barnay S."/>
            <person name="Blanchin S."/>
            <person name="Beckerich J.-M."/>
            <person name="Beyne E."/>
            <person name="Bleykasten C."/>
            <person name="Boisrame A."/>
            <person name="Boyer J."/>
            <person name="Cattolico L."/>
            <person name="Confanioleri F."/>
            <person name="de Daruvar A."/>
            <person name="Despons L."/>
            <person name="Fabre E."/>
            <person name="Fairhead C."/>
            <person name="Ferry-Dumazet H."/>
            <person name="Groppi A."/>
            <person name="Hantraye F."/>
            <person name="Hennequin C."/>
            <person name="Jauniaux N."/>
            <person name="Joyet P."/>
            <person name="Kachouri R."/>
            <person name="Kerrest A."/>
            <person name="Koszul R."/>
            <person name="Lemaire M."/>
            <person name="Lesur I."/>
            <person name="Ma L."/>
            <person name="Muller H."/>
            <person name="Nicaud J.-M."/>
            <person name="Nikolski M."/>
            <person name="Oztas S."/>
            <person name="Ozier-Kalogeropoulos O."/>
            <person name="Pellenz S."/>
            <person name="Potier S."/>
            <person name="Richard G.-F."/>
            <person name="Straub M.-L."/>
            <person name="Suleau A."/>
            <person name="Swennen D."/>
            <person name="Tekaia F."/>
            <person name="Wesolowski-Louvel M."/>
            <person name="Westhof E."/>
            <person name="Wirth B."/>
            <person name="Zeniou-Meyer M."/>
            <person name="Zivanovic Y."/>
            <person name="Bolotin-Fukuhara M."/>
            <person name="Thierry A."/>
            <person name="Bouchier C."/>
            <person name="Caudron B."/>
            <person name="Scarpelli C."/>
            <person name="Gaillardin C."/>
            <person name="Weissenbach J."/>
            <person name="Wincker P."/>
            <person name="Souciet J.-L."/>
        </authorList>
    </citation>
    <scope>NUCLEOTIDE SEQUENCE [LARGE SCALE GENOMIC DNA]</scope>
    <source>
        <strain>ATCC 36239 / CBS 767 / BCRC 21394 / JCM 1990 / NBRC 0083 / IGC 2968</strain>
    </source>
</reference>
<feature type="chain" id="PRO_0000175948" description="DASH complex subunit DAD3">
    <location>
        <begin position="1"/>
        <end position="143"/>
    </location>
</feature>
<feature type="region of interest" description="Disordered" evidence="3">
    <location>
        <begin position="32"/>
        <end position="62"/>
    </location>
</feature>
<feature type="region of interest" description="Disordered" evidence="3">
    <location>
        <begin position="96"/>
        <end position="143"/>
    </location>
</feature>
<feature type="compositionally biased region" description="Polar residues" evidence="3">
    <location>
        <begin position="32"/>
        <end position="59"/>
    </location>
</feature>
<feature type="compositionally biased region" description="Basic and acidic residues" evidence="3">
    <location>
        <begin position="96"/>
        <end position="121"/>
    </location>
</feature>
<feature type="compositionally biased region" description="Basic and acidic residues" evidence="3">
    <location>
        <begin position="131"/>
        <end position="143"/>
    </location>
</feature>